<keyword id="KW-0030">Aminoacyl-tRNA synthetase</keyword>
<keyword id="KW-0067">ATP-binding</keyword>
<keyword id="KW-0963">Cytoplasm</keyword>
<keyword id="KW-0436">Ligase</keyword>
<keyword id="KW-0479">Metal-binding</keyword>
<keyword id="KW-0547">Nucleotide-binding</keyword>
<keyword id="KW-0648">Protein biosynthesis</keyword>
<keyword id="KW-0862">Zinc</keyword>
<gene>
    <name evidence="1" type="primary">cysS</name>
    <name type="ordered locus">Vapar_3090</name>
</gene>
<feature type="chain" id="PRO_1000202136" description="Cysteine--tRNA ligase">
    <location>
        <begin position="1"/>
        <end position="459"/>
    </location>
</feature>
<feature type="short sequence motif" description="'HIGH' region">
    <location>
        <begin position="31"/>
        <end position="41"/>
    </location>
</feature>
<feature type="short sequence motif" description="'KMSKS' region">
    <location>
        <begin position="270"/>
        <end position="274"/>
    </location>
</feature>
<feature type="binding site" evidence="1">
    <location>
        <position position="29"/>
    </location>
    <ligand>
        <name>Zn(2+)</name>
        <dbReference type="ChEBI" id="CHEBI:29105"/>
    </ligand>
</feature>
<feature type="binding site" evidence="1">
    <location>
        <position position="213"/>
    </location>
    <ligand>
        <name>Zn(2+)</name>
        <dbReference type="ChEBI" id="CHEBI:29105"/>
    </ligand>
</feature>
<feature type="binding site" evidence="1">
    <location>
        <position position="238"/>
    </location>
    <ligand>
        <name>Zn(2+)</name>
        <dbReference type="ChEBI" id="CHEBI:29105"/>
    </ligand>
</feature>
<feature type="binding site" evidence="1">
    <location>
        <position position="242"/>
    </location>
    <ligand>
        <name>Zn(2+)</name>
        <dbReference type="ChEBI" id="CHEBI:29105"/>
    </ligand>
</feature>
<feature type="binding site" evidence="1">
    <location>
        <position position="273"/>
    </location>
    <ligand>
        <name>ATP</name>
        <dbReference type="ChEBI" id="CHEBI:30616"/>
    </ligand>
</feature>
<proteinExistence type="inferred from homology"/>
<evidence type="ECO:0000255" key="1">
    <source>
        <dbReference type="HAMAP-Rule" id="MF_00041"/>
    </source>
</evidence>
<protein>
    <recommendedName>
        <fullName evidence="1">Cysteine--tRNA ligase</fullName>
        <ecNumber evidence="1">6.1.1.16</ecNumber>
    </recommendedName>
    <alternativeName>
        <fullName evidence="1">Cysteinyl-tRNA synthetase</fullName>
        <shortName evidence="1">CysRS</shortName>
    </alternativeName>
</protein>
<organism>
    <name type="scientific">Variovorax paradoxus (strain S110)</name>
    <dbReference type="NCBI Taxonomy" id="543728"/>
    <lineage>
        <taxon>Bacteria</taxon>
        <taxon>Pseudomonadati</taxon>
        <taxon>Pseudomonadota</taxon>
        <taxon>Betaproteobacteria</taxon>
        <taxon>Burkholderiales</taxon>
        <taxon>Comamonadaceae</taxon>
        <taxon>Variovorax</taxon>
    </lineage>
</organism>
<name>SYC_VARPS</name>
<sequence length="459" mass="50973">MSLRIYNTLSRELEEFSPLQPGRVRMYVCGMTVYDLCHLGHARSMIAFDLVQRWLKASGLAVTYVRNITDIDDKIIRRAVENGETIRSLTDRMIDALHEDADALGIERPTHEPRATDYIPQMLSMIGTLEKKGLAYRAENGDVNYAVRKFPGYGKLSGKSIDELHAGERVAVLDGKDDPLDPVLWKSAKPSEPEEVKWASEFGPGRPGWHIECSAMACELLGETLDIHGGGEDLQFPHHENEIAQSEGATGKPLANYWMHNGFIVTDNEKMSKSLGNFFLIRDVLKKYDAETIRFFVVRAHYRRPLNYSDVHLDDARASLKRLYTSLDLVAPQALAAIDWNDPYAARFKAAMDEDFATPEAVAVLFDLAGEVNRTQSPAQAGLLKALGGCLNILQDDPKRFLRAGTTLDEATIQAQIDARAAAKAAKNFAEADRIRNDLLAQGIVLKDSPTGTTWAAAQ</sequence>
<dbReference type="EC" id="6.1.1.16" evidence="1"/>
<dbReference type="EMBL" id="CP001635">
    <property type="protein sequence ID" value="ACS19709.1"/>
    <property type="molecule type" value="Genomic_DNA"/>
</dbReference>
<dbReference type="SMR" id="C5CPX0"/>
<dbReference type="STRING" id="543728.Vapar_3090"/>
<dbReference type="KEGG" id="vap:Vapar_3090"/>
<dbReference type="eggNOG" id="COG0215">
    <property type="taxonomic scope" value="Bacteria"/>
</dbReference>
<dbReference type="HOGENOM" id="CLU_013528_0_1_4"/>
<dbReference type="OrthoDB" id="9815130at2"/>
<dbReference type="GO" id="GO:0005829">
    <property type="term" value="C:cytosol"/>
    <property type="evidence" value="ECO:0007669"/>
    <property type="project" value="TreeGrafter"/>
</dbReference>
<dbReference type="GO" id="GO:0005524">
    <property type="term" value="F:ATP binding"/>
    <property type="evidence" value="ECO:0007669"/>
    <property type="project" value="UniProtKB-UniRule"/>
</dbReference>
<dbReference type="GO" id="GO:0004817">
    <property type="term" value="F:cysteine-tRNA ligase activity"/>
    <property type="evidence" value="ECO:0007669"/>
    <property type="project" value="UniProtKB-UniRule"/>
</dbReference>
<dbReference type="GO" id="GO:0008270">
    <property type="term" value="F:zinc ion binding"/>
    <property type="evidence" value="ECO:0007669"/>
    <property type="project" value="UniProtKB-UniRule"/>
</dbReference>
<dbReference type="GO" id="GO:0006423">
    <property type="term" value="P:cysteinyl-tRNA aminoacylation"/>
    <property type="evidence" value="ECO:0007669"/>
    <property type="project" value="UniProtKB-UniRule"/>
</dbReference>
<dbReference type="CDD" id="cd07963">
    <property type="entry name" value="Anticodon_Ia_Cys"/>
    <property type="match status" value="1"/>
</dbReference>
<dbReference type="CDD" id="cd00672">
    <property type="entry name" value="CysRS_core"/>
    <property type="match status" value="1"/>
</dbReference>
<dbReference type="FunFam" id="3.40.50.620:FF:000009">
    <property type="entry name" value="Cysteine--tRNA ligase"/>
    <property type="match status" value="1"/>
</dbReference>
<dbReference type="Gene3D" id="1.20.120.1910">
    <property type="entry name" value="Cysteine-tRNA ligase, C-terminal anti-codon recognition domain"/>
    <property type="match status" value="1"/>
</dbReference>
<dbReference type="Gene3D" id="3.40.50.620">
    <property type="entry name" value="HUPs"/>
    <property type="match status" value="1"/>
</dbReference>
<dbReference type="HAMAP" id="MF_00041">
    <property type="entry name" value="Cys_tRNA_synth"/>
    <property type="match status" value="1"/>
</dbReference>
<dbReference type="InterPro" id="IPR015803">
    <property type="entry name" value="Cys-tRNA-ligase"/>
</dbReference>
<dbReference type="InterPro" id="IPR015273">
    <property type="entry name" value="Cys-tRNA-synt_Ia_DALR"/>
</dbReference>
<dbReference type="InterPro" id="IPR024909">
    <property type="entry name" value="Cys-tRNA/MSH_ligase"/>
</dbReference>
<dbReference type="InterPro" id="IPR056411">
    <property type="entry name" value="CysS_C"/>
</dbReference>
<dbReference type="InterPro" id="IPR014729">
    <property type="entry name" value="Rossmann-like_a/b/a_fold"/>
</dbReference>
<dbReference type="InterPro" id="IPR032678">
    <property type="entry name" value="tRNA-synt_1_cat_dom"/>
</dbReference>
<dbReference type="InterPro" id="IPR009080">
    <property type="entry name" value="tRNAsynth_Ia_anticodon-bd"/>
</dbReference>
<dbReference type="NCBIfam" id="TIGR00435">
    <property type="entry name" value="cysS"/>
    <property type="match status" value="1"/>
</dbReference>
<dbReference type="PANTHER" id="PTHR10890:SF3">
    <property type="entry name" value="CYSTEINE--TRNA LIGASE, CYTOPLASMIC"/>
    <property type="match status" value="1"/>
</dbReference>
<dbReference type="PANTHER" id="PTHR10890">
    <property type="entry name" value="CYSTEINYL-TRNA SYNTHETASE"/>
    <property type="match status" value="1"/>
</dbReference>
<dbReference type="Pfam" id="PF23493">
    <property type="entry name" value="CysS_C"/>
    <property type="match status" value="1"/>
</dbReference>
<dbReference type="Pfam" id="PF09190">
    <property type="entry name" value="DALR_2"/>
    <property type="match status" value="1"/>
</dbReference>
<dbReference type="Pfam" id="PF01406">
    <property type="entry name" value="tRNA-synt_1e"/>
    <property type="match status" value="1"/>
</dbReference>
<dbReference type="PRINTS" id="PR00983">
    <property type="entry name" value="TRNASYNTHCYS"/>
</dbReference>
<dbReference type="SMART" id="SM00840">
    <property type="entry name" value="DALR_2"/>
    <property type="match status" value="1"/>
</dbReference>
<dbReference type="SUPFAM" id="SSF47323">
    <property type="entry name" value="Anticodon-binding domain of a subclass of class I aminoacyl-tRNA synthetases"/>
    <property type="match status" value="1"/>
</dbReference>
<dbReference type="SUPFAM" id="SSF52374">
    <property type="entry name" value="Nucleotidylyl transferase"/>
    <property type="match status" value="1"/>
</dbReference>
<reference key="1">
    <citation type="journal article" date="2011" name="J. Bacteriol.">
        <title>Complete genome sequence of the metabolically versatile plant growth-promoting endophyte, Variovorax paradoxus S110.</title>
        <authorList>
            <person name="Han J.I."/>
            <person name="Choi H.K."/>
            <person name="Lee S.W."/>
            <person name="Orwin P.M."/>
            <person name="Kim J."/>
            <person name="Laroe S.L."/>
            <person name="Kim T.G."/>
            <person name="O'Neil J."/>
            <person name="Leadbetter J.R."/>
            <person name="Lee S.Y."/>
            <person name="Hur C.G."/>
            <person name="Spain J.C."/>
            <person name="Ovchinnikova G."/>
            <person name="Goodwin L."/>
            <person name="Han C."/>
        </authorList>
    </citation>
    <scope>NUCLEOTIDE SEQUENCE [LARGE SCALE GENOMIC DNA]</scope>
    <source>
        <strain>S110</strain>
    </source>
</reference>
<accession>C5CPX0</accession>
<comment type="catalytic activity">
    <reaction evidence="1">
        <text>tRNA(Cys) + L-cysteine + ATP = L-cysteinyl-tRNA(Cys) + AMP + diphosphate</text>
        <dbReference type="Rhea" id="RHEA:17773"/>
        <dbReference type="Rhea" id="RHEA-COMP:9661"/>
        <dbReference type="Rhea" id="RHEA-COMP:9679"/>
        <dbReference type="ChEBI" id="CHEBI:30616"/>
        <dbReference type="ChEBI" id="CHEBI:33019"/>
        <dbReference type="ChEBI" id="CHEBI:35235"/>
        <dbReference type="ChEBI" id="CHEBI:78442"/>
        <dbReference type="ChEBI" id="CHEBI:78517"/>
        <dbReference type="ChEBI" id="CHEBI:456215"/>
        <dbReference type="EC" id="6.1.1.16"/>
    </reaction>
</comment>
<comment type="cofactor">
    <cofactor evidence="1">
        <name>Zn(2+)</name>
        <dbReference type="ChEBI" id="CHEBI:29105"/>
    </cofactor>
    <text evidence="1">Binds 1 zinc ion per subunit.</text>
</comment>
<comment type="subunit">
    <text evidence="1">Monomer.</text>
</comment>
<comment type="subcellular location">
    <subcellularLocation>
        <location evidence="1">Cytoplasm</location>
    </subcellularLocation>
</comment>
<comment type="similarity">
    <text evidence="1">Belongs to the class-I aminoacyl-tRNA synthetase family.</text>
</comment>